<comment type="function">
    <text evidence="4">Probably catalyzes the deacetylation of acetylated carbohydrates an important step in the degradation of oligosaccharides.</text>
</comment>
<comment type="cofactor">
    <cofactor evidence="1">
        <name>Mg(2+)</name>
        <dbReference type="ChEBI" id="CHEBI:18420"/>
    </cofactor>
</comment>
<comment type="subunit">
    <text evidence="1">Homodimer.</text>
</comment>
<comment type="similarity">
    <text evidence="3">Belongs to the YdjC deacetylase family.</text>
</comment>
<proteinExistence type="evidence at protein level"/>
<sequence>MDLLERLGLGGRRVLILHHDDLGLTHAQNGAYQALGLPTGSVMVPGAWASGVKGEDLGVHLVLTSEWPAPRMRPLTEGESLRDEAGYFPESLEALWRKARAEEVERELKAQIQAAAKLFSPTHLDAHQGAVLRPDLAEVYLRLAEAYRLVPLVPESLEGLGVPPPFLPELERLLYETPFPQVRFLDPYGLPPEERLGFYLDLAHLPPGLYYLVHHSALPTPEGRALPDWPTREADYFALSHPEVRRVLAEFHPLTWRAVREALF</sequence>
<keyword id="KW-0002">3D-structure</keyword>
<keyword id="KW-0119">Carbohydrate metabolism</keyword>
<keyword id="KW-0378">Hydrolase</keyword>
<keyword id="KW-0460">Magnesium</keyword>
<keyword id="KW-0479">Metal-binding</keyword>
<keyword id="KW-0614">Plasmid</keyword>
<keyword id="KW-1185">Reference proteome</keyword>
<protein>
    <recommendedName>
        <fullName evidence="2">Carbohydrate deacetylase</fullName>
        <ecNumber evidence="4">3.5.1.-</ecNumber>
    </recommendedName>
</protein>
<reference key="1">
    <citation type="submission" date="2004-11" db="EMBL/GenBank/DDBJ databases">
        <title>Complete genome sequence of Thermus thermophilus HB8.</title>
        <authorList>
            <person name="Masui R."/>
            <person name="Kurokawa K."/>
            <person name="Nakagawa N."/>
            <person name="Tokunaga F."/>
            <person name="Koyama Y."/>
            <person name="Shibata T."/>
            <person name="Oshima T."/>
            <person name="Yokoyama S."/>
            <person name="Yasunaga T."/>
            <person name="Kuramitsu S."/>
        </authorList>
    </citation>
    <scope>NUCLEOTIDE SEQUENCE [LARGE SCALE GENOMIC DNA]</scope>
    <source>
        <strain>ATCC 27634 / DSM 579 / HB8</strain>
    </source>
</reference>
<reference key="2">
    <citation type="journal article" date="2008" name="Biochem. Biophys. Res. Commun.">
        <title>Crystal structure of the YdjC-family protein TTHB029 from Thermus thermophilus HB8: structural relationship with peptidoglycan N-acetylglucosamine deacetylase.</title>
        <authorList>
            <person name="Imagawa T."/>
            <person name="Iino H."/>
            <person name="Kanagawa M."/>
            <person name="Ebihara A."/>
            <person name="Kuramitsu S."/>
            <person name="Tsuge H."/>
        </authorList>
    </citation>
    <scope>X-RAY CRYSTALLOGRAPHY (2.90 ANGSTROMS) IN COMPLEX WITH MAGNESIUM</scope>
    <scope>FUNCTION</scope>
    <scope>COFACTOR</scope>
    <scope>ACTIVE SITE</scope>
    <scope>SUBUNIT</scope>
    <source>
        <strain>ATCC 27634 / DSM 579 / HB8</strain>
    </source>
</reference>
<accession>Q53WD3</accession>
<name>YDJC_THET8</name>
<geneLocation type="plasmid">
    <name>pTT27</name>
</geneLocation>
<feature type="chain" id="PRO_0000432126" description="Carbohydrate deacetylase">
    <location>
        <begin position="1"/>
        <end position="264"/>
    </location>
</feature>
<feature type="active site" description="Proton acceptor" evidence="4">
    <location>
        <position position="20"/>
    </location>
</feature>
<feature type="active site" description="Proton donor" evidence="4">
    <location>
        <position position="215"/>
    </location>
</feature>
<feature type="binding site" evidence="1">
    <location>
        <position position="21"/>
    </location>
    <ligand>
        <name>Mg(2+)</name>
        <dbReference type="ChEBI" id="CHEBI:18420"/>
    </ligand>
</feature>
<feature type="binding site" evidence="1">
    <location>
        <position position="60"/>
    </location>
    <ligand>
        <name>Mg(2+)</name>
        <dbReference type="ChEBI" id="CHEBI:18420"/>
    </ligand>
</feature>
<feature type="binding site" evidence="1">
    <location>
        <position position="127"/>
    </location>
    <ligand>
        <name>Mg(2+)</name>
        <dbReference type="ChEBI" id="CHEBI:18420"/>
    </ligand>
</feature>
<feature type="helix" evidence="5">
    <location>
        <begin position="3"/>
        <end position="6"/>
    </location>
</feature>
<feature type="strand" evidence="5">
    <location>
        <begin position="12"/>
        <end position="22"/>
    </location>
</feature>
<feature type="helix" evidence="5">
    <location>
        <begin position="26"/>
        <end position="35"/>
    </location>
</feature>
<feature type="strand" evidence="5">
    <location>
        <begin position="39"/>
        <end position="42"/>
    </location>
</feature>
<feature type="helix" evidence="5">
    <location>
        <begin position="49"/>
        <end position="51"/>
    </location>
</feature>
<feature type="strand" evidence="5">
    <location>
        <begin position="56"/>
        <end position="61"/>
    </location>
</feature>
<feature type="strand" evidence="5">
    <location>
        <begin position="67"/>
        <end position="70"/>
    </location>
</feature>
<feature type="helix" evidence="5">
    <location>
        <begin position="79"/>
        <end position="81"/>
    </location>
</feature>
<feature type="turn" evidence="5">
    <location>
        <begin position="84"/>
        <end position="86"/>
    </location>
</feature>
<feature type="helix" evidence="5">
    <location>
        <begin position="92"/>
        <end position="98"/>
    </location>
</feature>
<feature type="helix" evidence="5">
    <location>
        <begin position="101"/>
        <end position="116"/>
    </location>
</feature>
<feature type="strand" evidence="5">
    <location>
        <begin position="123"/>
        <end position="126"/>
    </location>
</feature>
<feature type="helix" evidence="5">
    <location>
        <begin position="127"/>
        <end position="132"/>
    </location>
</feature>
<feature type="helix" evidence="5">
    <location>
        <begin position="134"/>
        <end position="146"/>
    </location>
</feature>
<feature type="helix" evidence="5">
    <location>
        <begin position="164"/>
        <end position="166"/>
    </location>
</feature>
<feature type="helix" evidence="5">
    <location>
        <begin position="167"/>
        <end position="176"/>
    </location>
</feature>
<feature type="strand" evidence="5">
    <location>
        <begin position="182"/>
        <end position="185"/>
    </location>
</feature>
<feature type="helix" evidence="5">
    <location>
        <begin position="192"/>
        <end position="194"/>
    </location>
</feature>
<feature type="helix" evidence="5">
    <location>
        <begin position="195"/>
        <end position="201"/>
    </location>
</feature>
<feature type="helix" evidence="5">
    <location>
        <begin position="202"/>
        <end position="204"/>
    </location>
</feature>
<feature type="strand" evidence="5">
    <location>
        <begin position="207"/>
        <end position="214"/>
    </location>
</feature>
<feature type="helix" evidence="5">
    <location>
        <begin position="221"/>
        <end position="224"/>
    </location>
</feature>
<feature type="helix" evidence="5">
    <location>
        <begin position="229"/>
        <end position="239"/>
    </location>
</feature>
<feature type="helix" evidence="5">
    <location>
        <begin position="242"/>
        <end position="249"/>
    </location>
</feature>
<feature type="strand" evidence="5">
    <location>
        <begin position="251"/>
        <end position="253"/>
    </location>
</feature>
<feature type="helix" evidence="5">
    <location>
        <begin position="256"/>
        <end position="263"/>
    </location>
</feature>
<evidence type="ECO:0000269" key="1">
    <source>
    </source>
</evidence>
<evidence type="ECO:0000303" key="2">
    <source>
    </source>
</evidence>
<evidence type="ECO:0000305" key="3"/>
<evidence type="ECO:0000305" key="4">
    <source>
    </source>
</evidence>
<evidence type="ECO:0007829" key="5">
    <source>
        <dbReference type="PDB" id="2E67"/>
    </source>
</evidence>
<dbReference type="EC" id="3.5.1.-" evidence="4"/>
<dbReference type="EMBL" id="AP008227">
    <property type="protein sequence ID" value="BAD71825.1"/>
    <property type="molecule type" value="Genomic_DNA"/>
</dbReference>
<dbReference type="RefSeq" id="WP_011229247.1">
    <property type="nucleotide sequence ID" value="NC_006462.1"/>
</dbReference>
<dbReference type="RefSeq" id="YP_145268.1">
    <property type="nucleotide sequence ID" value="NC_006462.1"/>
</dbReference>
<dbReference type="PDB" id="2E67">
    <property type="method" value="X-ray"/>
    <property type="resolution" value="2.90 A"/>
    <property type="chains" value="A/B/C/D/E/F=1-264"/>
</dbReference>
<dbReference type="PDBsum" id="2E67"/>
<dbReference type="SMR" id="Q53WD3"/>
<dbReference type="EnsemblBacteria" id="BAD71825">
    <property type="protein sequence ID" value="BAD71825"/>
    <property type="gene ID" value="BAD71825"/>
</dbReference>
<dbReference type="GeneID" id="3169536"/>
<dbReference type="KEGG" id="ttj:TTHB029"/>
<dbReference type="PATRIC" id="fig|300852.9.peg.1973"/>
<dbReference type="HOGENOM" id="CLU_064244_0_0_0"/>
<dbReference type="EvolutionaryTrace" id="Q53WD3"/>
<dbReference type="Proteomes" id="UP000000532">
    <property type="component" value="Plasmid pTT27"/>
</dbReference>
<dbReference type="GO" id="GO:0016787">
    <property type="term" value="F:hydrolase activity"/>
    <property type="evidence" value="ECO:0007669"/>
    <property type="project" value="UniProtKB-KW"/>
</dbReference>
<dbReference type="GO" id="GO:0000287">
    <property type="term" value="F:magnesium ion binding"/>
    <property type="evidence" value="ECO:0000314"/>
    <property type="project" value="UniProtKB"/>
</dbReference>
<dbReference type="GO" id="GO:0005975">
    <property type="term" value="P:carbohydrate metabolic process"/>
    <property type="evidence" value="ECO:0007669"/>
    <property type="project" value="InterPro"/>
</dbReference>
<dbReference type="CDD" id="cd10802">
    <property type="entry name" value="YdjC_TTHB029_like"/>
    <property type="match status" value="1"/>
</dbReference>
<dbReference type="FunFam" id="3.20.20.370:FF:000031">
    <property type="entry name" value="Carbohydrate deacetylase"/>
    <property type="match status" value="1"/>
</dbReference>
<dbReference type="Gene3D" id="3.20.20.370">
    <property type="entry name" value="Glycoside hydrolase/deacetylase"/>
    <property type="match status" value="1"/>
</dbReference>
<dbReference type="InterPro" id="IPR011330">
    <property type="entry name" value="Glyco_hydro/deAcase_b/a-brl"/>
</dbReference>
<dbReference type="InterPro" id="IPR006879">
    <property type="entry name" value="YdjC-like"/>
</dbReference>
<dbReference type="Pfam" id="PF04794">
    <property type="entry name" value="YdjC"/>
    <property type="match status" value="1"/>
</dbReference>
<dbReference type="SUPFAM" id="SSF88713">
    <property type="entry name" value="Glycoside hydrolase/deacetylase"/>
    <property type="match status" value="1"/>
</dbReference>
<gene>
    <name type="ordered locus">TTHB029</name>
</gene>
<organism>
    <name type="scientific">Thermus thermophilus (strain ATCC 27634 / DSM 579 / HB8)</name>
    <dbReference type="NCBI Taxonomy" id="300852"/>
    <lineage>
        <taxon>Bacteria</taxon>
        <taxon>Thermotogati</taxon>
        <taxon>Deinococcota</taxon>
        <taxon>Deinococci</taxon>
        <taxon>Thermales</taxon>
        <taxon>Thermaceae</taxon>
        <taxon>Thermus</taxon>
    </lineage>
</organism>